<sequence length="401" mass="43791">MAATDRLNQTSDILSQSMKKTDSSMSVVTAENPYKVSVVGSGNWGTTIAKVVAENTKEKPELFQERVDMWVFEEQIDGTPLAQIINTKHQNVKYLPNIDLPDNLVANPDLIATTKDADVIVFNVPHQFLGRIVAQMKGQIKPTARAVSCLKGFEVGPKGVQLLSDYVTQELGIECGALSGANLAPEVAKEHWSETTVAYHIPDDFKGDGKDIDHRVLKQLFHRPYFHVNVIDDVAGISIAGALKNVVALGCGFVTGLGWGNNAAAAIQRVGLGEIIKFGRMFFPESKVETYYQESAGVADLITTCSGGRNVRVATEMAKTGKSGEQVEKDILNGQSAQGLVTCKEVHQWLESSGNTEDFPLFEAVYQITYENVPMKELPSMIEELDIDSTSKCVLSYKMGL</sequence>
<gene>
    <name type="primary">GPD1</name>
</gene>
<proteinExistence type="inferred from homology"/>
<evidence type="ECO:0000250" key="1"/>
<evidence type="ECO:0000305" key="2"/>
<accession>Q9HGY2</accession>
<name>GPD1_ZYGRO</name>
<feature type="chain" id="PRO_0000138101" description="Glycerol-3-phosphate dehydrogenase [NAD(+)] 1">
    <location>
        <begin position="1"/>
        <end position="401"/>
    </location>
</feature>
<feature type="active site" description="Proton acceptor" evidence="1">
    <location>
        <position position="244"/>
    </location>
</feature>
<feature type="binding site" evidence="1">
    <location>
        <begin position="40"/>
        <end position="45"/>
    </location>
    <ligand>
        <name>NAD(+)</name>
        <dbReference type="ChEBI" id="CHEBI:57540"/>
    </ligand>
</feature>
<feature type="binding site" evidence="1">
    <location>
        <position position="128"/>
    </location>
    <ligand>
        <name>NAD(+)</name>
        <dbReference type="ChEBI" id="CHEBI:57540"/>
    </ligand>
</feature>
<feature type="binding site" evidence="1">
    <location>
        <position position="151"/>
    </location>
    <ligand>
        <name>NAD(+)</name>
        <dbReference type="ChEBI" id="CHEBI:57540"/>
    </ligand>
</feature>
<feature type="binding site" evidence="1">
    <location>
        <position position="151"/>
    </location>
    <ligand>
        <name>substrate</name>
    </ligand>
</feature>
<feature type="binding site" evidence="1">
    <location>
        <position position="184"/>
    </location>
    <ligand>
        <name>NAD(+)</name>
        <dbReference type="ChEBI" id="CHEBI:57540"/>
    </ligand>
</feature>
<feature type="binding site" evidence="1">
    <location>
        <begin position="309"/>
        <end position="310"/>
    </location>
    <ligand>
        <name>substrate</name>
    </ligand>
</feature>
<feature type="binding site" evidence="1">
    <location>
        <position position="309"/>
    </location>
    <ligand>
        <name>NAD(+)</name>
        <dbReference type="ChEBI" id="CHEBI:57540"/>
    </ligand>
</feature>
<feature type="binding site" evidence="1">
    <location>
        <position position="338"/>
    </location>
    <ligand>
        <name>NAD(+)</name>
        <dbReference type="ChEBI" id="CHEBI:57540"/>
    </ligand>
</feature>
<organism>
    <name type="scientific">Zygosaccharomyces rouxii</name>
    <dbReference type="NCBI Taxonomy" id="4956"/>
    <lineage>
        <taxon>Eukaryota</taxon>
        <taxon>Fungi</taxon>
        <taxon>Dikarya</taxon>
        <taxon>Ascomycota</taxon>
        <taxon>Saccharomycotina</taxon>
        <taxon>Saccharomycetes</taxon>
        <taxon>Saccharomycetales</taxon>
        <taxon>Saccharomycetaceae</taxon>
        <taxon>Zygosaccharomyces</taxon>
    </lineage>
</organism>
<comment type="catalytic activity">
    <reaction>
        <text>sn-glycerol 3-phosphate + NAD(+) = dihydroxyacetone phosphate + NADH + H(+)</text>
        <dbReference type="Rhea" id="RHEA:11092"/>
        <dbReference type="ChEBI" id="CHEBI:15378"/>
        <dbReference type="ChEBI" id="CHEBI:57540"/>
        <dbReference type="ChEBI" id="CHEBI:57597"/>
        <dbReference type="ChEBI" id="CHEBI:57642"/>
        <dbReference type="ChEBI" id="CHEBI:57945"/>
        <dbReference type="EC" id="1.1.1.8"/>
    </reaction>
</comment>
<comment type="subcellular location">
    <subcellularLocation>
        <location evidence="2">Cytoplasm</location>
    </subcellularLocation>
</comment>
<comment type="similarity">
    <text evidence="2">Belongs to the NAD-dependent glycerol-3-phosphate dehydrogenase family.</text>
</comment>
<reference key="1">
    <citation type="journal article" date="2001" name="Yeast">
        <title>Cloning of glycerol-3-phosphate dehydrogenase genes (ZrGPD1 and ZrGPD2) and glycerol dehydrogenase genes (ZrGCY1 and ZrGCY2) from the salt-tolerant yeast Zygosaccharomyces rouxii.</title>
        <authorList>
            <person name="Iwaki T."/>
            <person name="Kurono S."/>
            <person name="Yokose Y."/>
            <person name="Kubota K."/>
            <person name="Tamai Y."/>
            <person name="Watanabe Y."/>
        </authorList>
    </citation>
    <scope>NUCLEOTIDE SEQUENCE [GENOMIC DNA]</scope>
    <source>
        <strain>ATCC 42981 / IAM 12879 / JCM 22060 / S-96</strain>
    </source>
</reference>
<keyword id="KW-0963">Cytoplasm</keyword>
<keyword id="KW-0520">NAD</keyword>
<keyword id="KW-0560">Oxidoreductase</keyword>
<protein>
    <recommendedName>
        <fullName>Glycerol-3-phosphate dehydrogenase [NAD(+)] 1</fullName>
        <ecNumber>1.1.1.8</ecNumber>
    </recommendedName>
    <alternativeName>
        <fullName>ZrGPD1</fullName>
    </alternativeName>
</protein>
<dbReference type="EC" id="1.1.1.8"/>
<dbReference type="EMBL" id="AB047394">
    <property type="protein sequence ID" value="BAB11957.1"/>
    <property type="molecule type" value="Genomic_DNA"/>
</dbReference>
<dbReference type="SMR" id="Q9HGY2"/>
<dbReference type="GO" id="GO:0005829">
    <property type="term" value="C:cytosol"/>
    <property type="evidence" value="ECO:0007669"/>
    <property type="project" value="TreeGrafter"/>
</dbReference>
<dbReference type="GO" id="GO:0005634">
    <property type="term" value="C:nucleus"/>
    <property type="evidence" value="ECO:0007669"/>
    <property type="project" value="TreeGrafter"/>
</dbReference>
<dbReference type="GO" id="GO:0141152">
    <property type="term" value="F:glycerol-3-phosphate dehydrogenase (NAD+) activity"/>
    <property type="evidence" value="ECO:0007669"/>
    <property type="project" value="UniProtKB-EC"/>
</dbReference>
<dbReference type="GO" id="GO:0051287">
    <property type="term" value="F:NAD binding"/>
    <property type="evidence" value="ECO:0007669"/>
    <property type="project" value="InterPro"/>
</dbReference>
<dbReference type="GO" id="GO:0042803">
    <property type="term" value="F:protein homodimerization activity"/>
    <property type="evidence" value="ECO:0007669"/>
    <property type="project" value="InterPro"/>
</dbReference>
<dbReference type="GO" id="GO:0005975">
    <property type="term" value="P:carbohydrate metabolic process"/>
    <property type="evidence" value="ECO:0007669"/>
    <property type="project" value="InterPro"/>
</dbReference>
<dbReference type="GO" id="GO:0046168">
    <property type="term" value="P:glycerol-3-phosphate catabolic process"/>
    <property type="evidence" value="ECO:0007669"/>
    <property type="project" value="InterPro"/>
</dbReference>
<dbReference type="FunFam" id="1.10.1040.10:FF:000004">
    <property type="entry name" value="Glycerol-3-phosphate dehydrogenase [NAD(+)]"/>
    <property type="match status" value="1"/>
</dbReference>
<dbReference type="FunFam" id="3.40.50.720:FF:000294">
    <property type="entry name" value="Glycerol-3-phosphate dehydrogenase [NAD(+)]"/>
    <property type="match status" value="1"/>
</dbReference>
<dbReference type="Gene3D" id="1.10.1040.10">
    <property type="entry name" value="N-(1-d-carboxylethyl)-l-norvaline Dehydrogenase, domain 2"/>
    <property type="match status" value="1"/>
</dbReference>
<dbReference type="Gene3D" id="3.40.50.720">
    <property type="entry name" value="NAD(P)-binding Rossmann-like Domain"/>
    <property type="match status" value="1"/>
</dbReference>
<dbReference type="InterPro" id="IPR008927">
    <property type="entry name" value="6-PGluconate_DH-like_C_sf"/>
</dbReference>
<dbReference type="InterPro" id="IPR013328">
    <property type="entry name" value="6PGD_dom2"/>
</dbReference>
<dbReference type="InterPro" id="IPR006168">
    <property type="entry name" value="G3P_DH_NAD-dep"/>
</dbReference>
<dbReference type="InterPro" id="IPR006109">
    <property type="entry name" value="G3P_DH_NAD-dep_C"/>
</dbReference>
<dbReference type="InterPro" id="IPR017751">
    <property type="entry name" value="G3P_DH_NAD-dep_euk"/>
</dbReference>
<dbReference type="InterPro" id="IPR011128">
    <property type="entry name" value="G3P_DH_NAD-dep_N"/>
</dbReference>
<dbReference type="InterPro" id="IPR036291">
    <property type="entry name" value="NAD(P)-bd_dom_sf"/>
</dbReference>
<dbReference type="NCBIfam" id="TIGR03376">
    <property type="entry name" value="glycerol3P_DH"/>
    <property type="match status" value="1"/>
</dbReference>
<dbReference type="PANTHER" id="PTHR11728">
    <property type="entry name" value="GLYCEROL-3-PHOSPHATE DEHYDROGENASE"/>
    <property type="match status" value="1"/>
</dbReference>
<dbReference type="PANTHER" id="PTHR11728:SF8">
    <property type="entry name" value="GLYCEROL-3-PHOSPHATE DEHYDROGENASE [NAD(+)]-RELATED"/>
    <property type="match status" value="1"/>
</dbReference>
<dbReference type="Pfam" id="PF07479">
    <property type="entry name" value="NAD_Gly3P_dh_C"/>
    <property type="match status" value="1"/>
</dbReference>
<dbReference type="Pfam" id="PF01210">
    <property type="entry name" value="NAD_Gly3P_dh_N"/>
    <property type="match status" value="1"/>
</dbReference>
<dbReference type="PIRSF" id="PIRSF000114">
    <property type="entry name" value="Glycerol-3-P_dh"/>
    <property type="match status" value="1"/>
</dbReference>
<dbReference type="PRINTS" id="PR00077">
    <property type="entry name" value="GPDHDRGNASE"/>
</dbReference>
<dbReference type="SUPFAM" id="SSF48179">
    <property type="entry name" value="6-phosphogluconate dehydrogenase C-terminal domain-like"/>
    <property type="match status" value="1"/>
</dbReference>
<dbReference type="SUPFAM" id="SSF51735">
    <property type="entry name" value="NAD(P)-binding Rossmann-fold domains"/>
    <property type="match status" value="1"/>
</dbReference>
<dbReference type="PROSITE" id="PS00957">
    <property type="entry name" value="NAD_G3PDH"/>
    <property type="match status" value="1"/>
</dbReference>